<dbReference type="EMBL" id="CP000800">
    <property type="protein sequence ID" value="ABV19327.1"/>
    <property type="molecule type" value="Genomic_DNA"/>
</dbReference>
<dbReference type="RefSeq" id="WP_000591352.1">
    <property type="nucleotide sequence ID" value="NC_009801.1"/>
</dbReference>
<dbReference type="SMR" id="A7ZUI6"/>
<dbReference type="KEGG" id="ecw:EcE24377A_4507"/>
<dbReference type="HOGENOM" id="CLU_008287_18_5_6"/>
<dbReference type="Proteomes" id="UP000001122">
    <property type="component" value="Chromosome"/>
</dbReference>
<dbReference type="GO" id="GO:0009279">
    <property type="term" value="C:cell outer membrane"/>
    <property type="evidence" value="ECO:0007669"/>
    <property type="project" value="UniProtKB-SubCell"/>
</dbReference>
<dbReference type="GO" id="GO:0046930">
    <property type="term" value="C:pore complex"/>
    <property type="evidence" value="ECO:0007669"/>
    <property type="project" value="UniProtKB-KW"/>
</dbReference>
<dbReference type="GO" id="GO:0015420">
    <property type="term" value="F:ABC-type vitamin B12 transporter activity"/>
    <property type="evidence" value="ECO:0007669"/>
    <property type="project" value="InterPro"/>
</dbReference>
<dbReference type="GO" id="GO:0046872">
    <property type="term" value="F:metal ion binding"/>
    <property type="evidence" value="ECO:0007669"/>
    <property type="project" value="UniProtKB-KW"/>
</dbReference>
<dbReference type="GO" id="GO:0015288">
    <property type="term" value="F:porin activity"/>
    <property type="evidence" value="ECO:0007669"/>
    <property type="project" value="UniProtKB-KW"/>
</dbReference>
<dbReference type="GO" id="GO:0006811">
    <property type="term" value="P:monoatomic ion transport"/>
    <property type="evidence" value="ECO:0007669"/>
    <property type="project" value="UniProtKB-KW"/>
</dbReference>
<dbReference type="CDD" id="cd01347">
    <property type="entry name" value="ligand_gated_channel"/>
    <property type="match status" value="1"/>
</dbReference>
<dbReference type="FunFam" id="2.170.130.10:FF:000002">
    <property type="entry name" value="Vitamin B12 transporter BtuB"/>
    <property type="match status" value="1"/>
</dbReference>
<dbReference type="FunFam" id="2.40.170.20:FF:000001">
    <property type="entry name" value="Vitamin B12 transporter BtuB"/>
    <property type="match status" value="1"/>
</dbReference>
<dbReference type="Gene3D" id="2.40.170.20">
    <property type="entry name" value="TonB-dependent receptor, beta-barrel domain"/>
    <property type="match status" value="1"/>
</dbReference>
<dbReference type="Gene3D" id="2.170.130.10">
    <property type="entry name" value="TonB-dependent receptor, plug domain"/>
    <property type="match status" value="1"/>
</dbReference>
<dbReference type="HAMAP" id="MF_01531">
    <property type="entry name" value="BtuB"/>
    <property type="match status" value="1"/>
</dbReference>
<dbReference type="InterPro" id="IPR010101">
    <property type="entry name" value="B12_transptr_BtuB"/>
</dbReference>
<dbReference type="InterPro" id="IPR012910">
    <property type="entry name" value="Plug_dom"/>
</dbReference>
<dbReference type="InterPro" id="IPR037066">
    <property type="entry name" value="Plug_dom_sf"/>
</dbReference>
<dbReference type="InterPro" id="IPR039426">
    <property type="entry name" value="TonB-dep_rcpt-like"/>
</dbReference>
<dbReference type="InterPro" id="IPR000531">
    <property type="entry name" value="TonB-dep_rcpt_b-brl"/>
</dbReference>
<dbReference type="InterPro" id="IPR010916">
    <property type="entry name" value="TonB_box_CS"/>
</dbReference>
<dbReference type="InterPro" id="IPR036942">
    <property type="entry name" value="TonB_rcpt_b-brl_sf"/>
</dbReference>
<dbReference type="InterPro" id="IPR010917">
    <property type="entry name" value="TonB_rcpt_CS"/>
</dbReference>
<dbReference type="NCBIfam" id="NF007926">
    <property type="entry name" value="PRK10641.1"/>
    <property type="match status" value="1"/>
</dbReference>
<dbReference type="NCBIfam" id="TIGR01779">
    <property type="entry name" value="TonB-B12"/>
    <property type="match status" value="1"/>
</dbReference>
<dbReference type="PANTHER" id="PTHR30069:SF53">
    <property type="entry name" value="COLICIN I RECEPTOR-RELATED"/>
    <property type="match status" value="1"/>
</dbReference>
<dbReference type="PANTHER" id="PTHR30069">
    <property type="entry name" value="TONB-DEPENDENT OUTER MEMBRANE RECEPTOR"/>
    <property type="match status" value="1"/>
</dbReference>
<dbReference type="Pfam" id="PF07715">
    <property type="entry name" value="Plug"/>
    <property type="match status" value="1"/>
</dbReference>
<dbReference type="Pfam" id="PF00593">
    <property type="entry name" value="TonB_dep_Rec_b-barrel"/>
    <property type="match status" value="1"/>
</dbReference>
<dbReference type="SUPFAM" id="SSF56935">
    <property type="entry name" value="Porins"/>
    <property type="match status" value="1"/>
</dbReference>
<dbReference type="PROSITE" id="PS00430">
    <property type="entry name" value="TONB_DEPENDENT_REC_1"/>
    <property type="match status" value="1"/>
</dbReference>
<dbReference type="PROSITE" id="PS01156">
    <property type="entry name" value="TONB_DEPENDENT_REC_2"/>
    <property type="match status" value="1"/>
</dbReference>
<dbReference type="PROSITE" id="PS52016">
    <property type="entry name" value="TONB_DEPENDENT_REC_3"/>
    <property type="match status" value="1"/>
</dbReference>
<organism>
    <name type="scientific">Escherichia coli O139:H28 (strain E24377A / ETEC)</name>
    <dbReference type="NCBI Taxonomy" id="331111"/>
    <lineage>
        <taxon>Bacteria</taxon>
        <taxon>Pseudomonadati</taxon>
        <taxon>Pseudomonadota</taxon>
        <taxon>Gammaproteobacteria</taxon>
        <taxon>Enterobacterales</taxon>
        <taxon>Enterobacteriaceae</taxon>
        <taxon>Escherichia</taxon>
    </lineage>
</organism>
<sequence>MIKKASLLTACSVTAFSAWAQDTSPDTLVVTANRFEQPRSTVLAPTTVVTRQDIDRWQSTSVNDVLRRLPGVDITQNGGSGQLSSIFIRGTNASHVLVLIDGVRLNLAGVSGSADLSQFPIALVQRVEYIRGPRSAVYGSDAIGGVVNIITTRDEPGTEISAGWGSNSYQNYDVSTQQQLGDKTRVTLLGDYAHTHGYDVVAYGNTGTQAQTDNDGFLSKTLYGALEHNFTDAWSGFVRGYGYDNRTNYDAYYSPGSPLLDTRKLYSQSWDAGLRYNGELIKSQLITSYSHSKDYNYDPHFGRYDSSATLDEMKQYTVQWANNVIVGHGSIGAGVDWQKQTTTPGTGYVENGYDQRNTGIYLTGLQQVGDFTFEGAARNDDNSQFGRHGTWQTSAGWEFIEGYRFIASYGTSYKAPNLGQLYGFYGNPNLDPEKSKQWEGAFEGLTAGVNWRISGYRNDVSDLIDYDDHTLKYYNEGKARIKGVEATANFDTGPLTHTVSYDYVDARNAITDTPLLRRAKQQVKYQLDWQLYDFDWGITYQYLGTRYDKDYSSYPYQTVKMGGVSLWDLAVAYPVTSHLTVRGKIANLFDKDYETVYGYQTAGREYTLSGSYTF</sequence>
<proteinExistence type="inferred from homology"/>
<protein>
    <recommendedName>
        <fullName evidence="1">Vitamin B12 transporter BtuB</fullName>
    </recommendedName>
    <alternativeName>
        <fullName evidence="1">Cobalamin receptor</fullName>
    </alternativeName>
    <alternativeName>
        <fullName evidence="1">Outer membrane cobalamin translocator</fullName>
    </alternativeName>
</protein>
<evidence type="ECO:0000255" key="1">
    <source>
        <dbReference type="HAMAP-Rule" id="MF_01531"/>
    </source>
</evidence>
<evidence type="ECO:0000255" key="2">
    <source>
        <dbReference type="PROSITE-ProRule" id="PRU01360"/>
    </source>
</evidence>
<reference key="1">
    <citation type="journal article" date="2008" name="J. Bacteriol.">
        <title>The pangenome structure of Escherichia coli: comparative genomic analysis of E. coli commensal and pathogenic isolates.</title>
        <authorList>
            <person name="Rasko D.A."/>
            <person name="Rosovitz M.J."/>
            <person name="Myers G.S.A."/>
            <person name="Mongodin E.F."/>
            <person name="Fricke W.F."/>
            <person name="Gajer P."/>
            <person name="Crabtree J."/>
            <person name="Sebaihia M."/>
            <person name="Thomson N.R."/>
            <person name="Chaudhuri R."/>
            <person name="Henderson I.R."/>
            <person name="Sperandio V."/>
            <person name="Ravel J."/>
        </authorList>
    </citation>
    <scope>NUCLEOTIDE SEQUENCE [LARGE SCALE GENOMIC DNA]</scope>
    <source>
        <strain>E24377A / ETEC</strain>
    </source>
</reference>
<accession>A7ZUI6</accession>
<name>BTUB_ECO24</name>
<keyword id="KW-0106">Calcium</keyword>
<keyword id="KW-0998">Cell outer membrane</keyword>
<keyword id="KW-0406">Ion transport</keyword>
<keyword id="KW-0472">Membrane</keyword>
<keyword id="KW-0479">Metal-binding</keyword>
<keyword id="KW-0626">Porin</keyword>
<keyword id="KW-1185">Reference proteome</keyword>
<keyword id="KW-0732">Signal</keyword>
<keyword id="KW-0798">TonB box</keyword>
<keyword id="KW-0812">Transmembrane</keyword>
<keyword id="KW-1134">Transmembrane beta strand</keyword>
<keyword id="KW-0813">Transport</keyword>
<comment type="function">
    <text evidence="1">Involved in the active translocation of vitamin B12 (cyanocobalamin) across the outer membrane to the periplasmic space. It derives its energy for transport by interacting with the trans-periplasmic membrane protein TonB.</text>
</comment>
<comment type="subcellular location">
    <subcellularLocation>
        <location evidence="1">Cell outer membrane</location>
        <topology evidence="1">Multi-pass membrane protein</topology>
    </subcellularLocation>
</comment>
<comment type="similarity">
    <text evidence="1">Belongs to the TonB-dependent receptor family. BtuB (TC 1.B.14.3.1) subfamily.</text>
</comment>
<feature type="signal peptide" evidence="1">
    <location>
        <begin position="1"/>
        <end position="20"/>
    </location>
</feature>
<feature type="chain" id="PRO_0000316878" description="Vitamin B12 transporter BtuB">
    <location>
        <begin position="21"/>
        <end position="614"/>
    </location>
</feature>
<feature type="transmembrane region" description="Beta stranded" evidence="1">
    <location>
        <begin position="158"/>
        <end position="165"/>
    </location>
</feature>
<feature type="transmembrane region" description="Beta stranded" evidence="1">
    <location>
        <begin position="169"/>
        <end position="178"/>
    </location>
</feature>
<feature type="transmembrane region" description="Beta stranded" evidence="1">
    <location>
        <begin position="184"/>
        <end position="195"/>
    </location>
</feature>
<feature type="transmembrane region" description="Beta stranded" evidence="1">
    <location>
        <begin position="217"/>
        <end position="227"/>
    </location>
</feature>
<feature type="transmembrane region" description="Beta stranded" evidence="1">
    <location>
        <begin position="232"/>
        <end position="248"/>
    </location>
</feature>
<feature type="transmembrane region" description="Beta stranded" evidence="1">
    <location>
        <begin position="263"/>
        <end position="277"/>
    </location>
</feature>
<feature type="transmembrane region" description="Beta stranded" evidence="1">
    <location>
        <begin position="279"/>
        <end position="296"/>
    </location>
</feature>
<feature type="transmembrane region" description="Beta stranded" evidence="1">
    <location>
        <begin position="309"/>
        <end position="325"/>
    </location>
</feature>
<feature type="transmembrane region" description="Beta stranded" evidence="1">
    <location>
        <begin position="328"/>
        <end position="337"/>
    </location>
</feature>
<feature type="transmembrane region" description="Beta stranded" evidence="1">
    <location>
        <begin position="353"/>
        <end position="369"/>
    </location>
</feature>
<feature type="transmembrane region" description="Beta stranded" evidence="1">
    <location>
        <begin position="371"/>
        <end position="381"/>
    </location>
</feature>
<feature type="transmembrane region" description="Beta stranded" evidence="1">
    <location>
        <begin position="385"/>
        <end position="400"/>
    </location>
</feature>
<feature type="transmembrane region" description="Beta stranded" evidence="1">
    <location>
        <begin position="403"/>
        <end position="417"/>
    </location>
</feature>
<feature type="transmembrane region" description="Beta stranded" evidence="1">
    <location>
        <begin position="434"/>
        <end position="443"/>
    </location>
</feature>
<feature type="transmembrane region" description="Beta stranded" evidence="1">
    <location>
        <begin position="449"/>
        <end position="458"/>
    </location>
</feature>
<feature type="transmembrane region" description="Beta stranded" evidence="1">
    <location>
        <begin position="473"/>
        <end position="490"/>
    </location>
</feature>
<feature type="transmembrane region" description="Beta stranded" evidence="1">
    <location>
        <begin position="494"/>
        <end position="509"/>
    </location>
</feature>
<feature type="transmembrane region" description="Beta stranded" evidence="1">
    <location>
        <begin position="517"/>
        <end position="529"/>
    </location>
</feature>
<feature type="transmembrane region" description="Beta stranded" evidence="1">
    <location>
        <begin position="535"/>
        <end position="550"/>
    </location>
</feature>
<feature type="transmembrane region" description="Beta stranded" evidence="1">
    <location>
        <begin position="558"/>
        <end position="572"/>
    </location>
</feature>
<feature type="transmembrane region" description="Beta stranded" evidence="1">
    <location>
        <begin position="585"/>
        <end position="596"/>
    </location>
</feature>
<feature type="transmembrane region" description="Beta stranded" evidence="1">
    <location>
        <begin position="602"/>
        <end position="614"/>
    </location>
</feature>
<feature type="domain" description="TBDR plug" evidence="2">
    <location>
        <begin position="38"/>
        <end position="152"/>
    </location>
</feature>
<feature type="domain" description="TBDR beta-barrel" evidence="2">
    <location>
        <begin position="155"/>
        <end position="614"/>
    </location>
</feature>
<feature type="short sequence motif" description="TonB box">
    <location>
        <begin position="26"/>
        <end position="33"/>
    </location>
</feature>
<feature type="short sequence motif" description="TonB C-terminal box">
    <location>
        <begin position="597"/>
        <end position="614"/>
    </location>
</feature>
<feature type="binding site" evidence="1">
    <location>
        <position position="83"/>
    </location>
    <ligand>
        <name>cyanocob(III)alamin</name>
        <dbReference type="ChEBI" id="CHEBI:17439"/>
    </ligand>
</feature>
<feature type="binding site" evidence="1">
    <location>
        <position position="85"/>
    </location>
    <ligand>
        <name>cyanocob(III)alamin</name>
        <dbReference type="ChEBI" id="CHEBI:17439"/>
    </ligand>
</feature>
<feature type="binding site" evidence="1">
    <location>
        <position position="92"/>
    </location>
    <ligand>
        <name>cyanocob(III)alamin</name>
        <dbReference type="ChEBI" id="CHEBI:17439"/>
    </ligand>
</feature>
<feature type="binding site" evidence="1">
    <location>
        <begin position="110"/>
        <end position="111"/>
    </location>
    <ligand>
        <name>cyanocob(III)alamin</name>
        <dbReference type="ChEBI" id="CHEBI:17439"/>
    </ligand>
</feature>
<feature type="binding site" evidence="1">
    <location>
        <position position="199"/>
    </location>
    <ligand>
        <name>Ca(2+)</name>
        <dbReference type="ChEBI" id="CHEBI:29108"/>
        <label>1</label>
    </ligand>
</feature>
<feature type="binding site" evidence="1">
    <location>
        <position position="211"/>
    </location>
    <ligand>
        <name>Ca(2+)</name>
        <dbReference type="ChEBI" id="CHEBI:29108"/>
        <label>1</label>
    </ligand>
</feature>
<feature type="binding site" evidence="1">
    <location>
        <position position="213"/>
    </location>
    <ligand>
        <name>Ca(2+)</name>
        <dbReference type="ChEBI" id="CHEBI:29108"/>
        <label>1</label>
    </ligand>
</feature>
<feature type="binding site" evidence="1">
    <location>
        <position position="213"/>
    </location>
    <ligand>
        <name>Ca(2+)</name>
        <dbReference type="ChEBI" id="CHEBI:29108"/>
        <label>2</label>
    </ligand>
</feature>
<feature type="binding site" evidence="1">
    <location>
        <position position="215"/>
    </location>
    <ligand>
        <name>Ca(2+)</name>
        <dbReference type="ChEBI" id="CHEBI:29108"/>
        <label>1</label>
    </ligand>
</feature>
<feature type="binding site" evidence="1">
    <location>
        <position position="215"/>
    </location>
    <ligand>
        <name>Ca(2+)</name>
        <dbReference type="ChEBI" id="CHEBI:29108"/>
        <label>2</label>
    </ligand>
</feature>
<feature type="binding site" evidence="1">
    <location>
        <position position="249"/>
    </location>
    <ligand>
        <name>Ca(2+)</name>
        <dbReference type="ChEBI" id="CHEBI:29108"/>
        <label>2</label>
    </ligand>
</feature>
<feature type="binding site" evidence="1">
    <location>
        <position position="250"/>
    </location>
    <ligand>
        <name>Ca(2+)</name>
        <dbReference type="ChEBI" id="CHEBI:29108"/>
        <label>1</label>
    </ligand>
</feature>
<feature type="binding site" evidence="1">
    <location>
        <position position="250"/>
    </location>
    <ligand>
        <name>Ca(2+)</name>
        <dbReference type="ChEBI" id="CHEBI:29108"/>
        <label>2</label>
    </ligand>
</feature>
<feature type="binding site" evidence="1">
    <location>
        <position position="251"/>
    </location>
    <ligand>
        <name>cyanocob(III)alamin</name>
        <dbReference type="ChEBI" id="CHEBI:17439"/>
    </ligand>
</feature>
<feature type="binding site" evidence="1">
    <location>
        <position position="261"/>
    </location>
    <ligand>
        <name>Ca(2+)</name>
        <dbReference type="ChEBI" id="CHEBI:29108"/>
        <label>2</label>
    </ligand>
</feature>
<feature type="binding site" evidence="1">
    <location>
        <position position="309"/>
    </location>
    <ligand>
        <name>cyanocob(III)alamin</name>
        <dbReference type="ChEBI" id="CHEBI:17439"/>
    </ligand>
</feature>
<feature type="binding site" evidence="1">
    <location>
        <position position="517"/>
    </location>
    <ligand>
        <name>cyanocob(III)alamin</name>
        <dbReference type="ChEBI" id="CHEBI:17439"/>
    </ligand>
</feature>
<feature type="binding site" evidence="1">
    <location>
        <position position="551"/>
    </location>
    <ligand>
        <name>cyanocob(III)alamin</name>
        <dbReference type="ChEBI" id="CHEBI:17439"/>
    </ligand>
</feature>
<gene>
    <name evidence="1" type="primary">btuB</name>
    <name type="ordered locus">EcE24377A_4507</name>
</gene>